<dbReference type="EC" id="4.2.2.3"/>
<dbReference type="EMBL" id="X70036">
    <property type="protein sequence ID" value="CAA49630.1"/>
    <property type="molecule type" value="Genomic_DNA"/>
</dbReference>
<dbReference type="PIR" id="S31708">
    <property type="entry name" value="S31708"/>
</dbReference>
<dbReference type="SMR" id="P39049"/>
<dbReference type="CAZy" id="PL7">
    <property type="family name" value="Polysaccharide Lyase Family 7"/>
</dbReference>
<dbReference type="BRENDA" id="4.2.2.3">
    <property type="organism ID" value="4781"/>
</dbReference>
<dbReference type="GO" id="GO:0045135">
    <property type="term" value="F:poly(beta-D-mannuronate) lyase activity"/>
    <property type="evidence" value="ECO:0007669"/>
    <property type="project" value="UniProtKB-EC"/>
</dbReference>
<dbReference type="Gene3D" id="2.60.120.200">
    <property type="match status" value="1"/>
</dbReference>
<dbReference type="InterPro" id="IPR014895">
    <property type="entry name" value="Alginate_lyase_2"/>
</dbReference>
<dbReference type="InterPro" id="IPR013320">
    <property type="entry name" value="ConA-like_dom_sf"/>
</dbReference>
<dbReference type="Pfam" id="PF08787">
    <property type="entry name" value="Alginate_lyase2"/>
    <property type="match status" value="1"/>
</dbReference>
<dbReference type="SUPFAM" id="SSF49899">
    <property type="entry name" value="Concanavalin A-like lectins/glucanases"/>
    <property type="match status" value="1"/>
</dbReference>
<sequence length="285" mass="32129">MIKSNLVISSLAIVSSMSYAGVEFSNPSGQLGEPANYTQFANILSASELQISDPNGKKGNKEYFALDNDFTGIVNDNFYVDKQSQALVFKMANDHLRNELRVQKNFRTDLPDHFYTLYANVEILHPLQSMANSTSKQNEITFLQVHNKGLDDQGTHNVPHPLLRVVWKENNQGVKGHFWAITKNNAVICKGSFGKKNKDKEMCRADVAYSKIDLGPAPTDKGTDFTITVGNKTLAIDVNGQRKVEKNIDYWRHLLSYFKAGVYNQFTQGESEAHFNQLRYQVNTP</sequence>
<comment type="catalytic activity">
    <reaction>
        <text>Eliminative cleavage of alginate to give oligosaccharides with 4-deoxy-alpha-L-erythro-hex-4-enuronosyl groups at their non-reducing ends and beta-D-mannuronate at their reducing end.</text>
        <dbReference type="EC" id="4.2.2.3"/>
    </reaction>
</comment>
<comment type="similarity">
    <text evidence="2">Belongs to the polysaccharide lyase 6 family.</text>
</comment>
<keyword id="KW-0903">Direct protein sequencing</keyword>
<keyword id="KW-0456">Lyase</keyword>
<keyword id="KW-0732">Signal</keyword>
<proteinExistence type="evidence at protein level"/>
<evidence type="ECO:0000269" key="1">
    <source>
    </source>
</evidence>
<evidence type="ECO:0000305" key="2"/>
<name>ALXM_PHOS4</name>
<gene>
    <name type="primary">alxM</name>
</gene>
<organism>
    <name type="scientific">Photobacterium sp. (strain ATCC 43367)</name>
    <dbReference type="NCBI Taxonomy" id="379097"/>
    <lineage>
        <taxon>Bacteria</taxon>
        <taxon>Pseudomonadati</taxon>
        <taxon>Pseudomonadota</taxon>
        <taxon>Gammaproteobacteria</taxon>
        <taxon>Vibrionales</taxon>
        <taxon>Vibrionaceae</taxon>
        <taxon>Vibrio</taxon>
        <taxon>Vibrio oreintalis group</taxon>
    </lineage>
</organism>
<protein>
    <recommendedName>
        <fullName>Alginate lyase</fullName>
        <ecNumber>4.2.2.3</ecNumber>
    </recommendedName>
    <alternativeName>
        <fullName>Poly(Beta-D-mannuronate) lyase</fullName>
    </alternativeName>
    <alternativeName>
        <fullName>Poly(mana) alginate lyase</fullName>
    </alternativeName>
</protein>
<feature type="signal peptide" evidence="1">
    <location>
        <begin position="1"/>
        <end position="20"/>
    </location>
</feature>
<feature type="chain" id="PRO_0000024923" description="Alginate lyase">
    <location>
        <begin position="21"/>
        <end position="285"/>
    </location>
</feature>
<accession>P39049</accession>
<reference key="1">
    <citation type="journal article" date="1993" name="FEMS Microbiol. Lett.">
        <title>Sequence of a gene encoding a (poly ManA) alginate lyase active on Pseudomonas aeruginosa alginate.</title>
        <authorList>
            <person name="Malissard M."/>
            <person name="Duez C."/>
            <person name="Guinand M."/>
            <person name="Vacheron M.-J."/>
            <person name="Michel G."/>
            <person name="Marty N."/>
            <person name="Joris B."/>
            <person name="Thamm I."/>
            <person name="Ghuysen J.-M."/>
        </authorList>
    </citation>
    <scope>NUCLEOTIDE SEQUENCE [GENOMIC DNA]</scope>
    <scope>PROTEIN SEQUENCE OF 21-27</scope>
</reference>